<name>TRPB2_MAIZE</name>
<gene>
    <name type="primary">TSB2</name>
    <name type="synonym">ORP2</name>
</gene>
<comment type="function">
    <text>The beta subunit is responsible for the synthesis of L-tryptophan from indole and L-serine.</text>
</comment>
<comment type="catalytic activity">
    <reaction>
        <text>(1S,2R)-1-C-(indol-3-yl)glycerol 3-phosphate + L-serine = D-glyceraldehyde 3-phosphate + L-tryptophan + H2O</text>
        <dbReference type="Rhea" id="RHEA:10532"/>
        <dbReference type="ChEBI" id="CHEBI:15377"/>
        <dbReference type="ChEBI" id="CHEBI:33384"/>
        <dbReference type="ChEBI" id="CHEBI:57912"/>
        <dbReference type="ChEBI" id="CHEBI:58866"/>
        <dbReference type="ChEBI" id="CHEBI:59776"/>
        <dbReference type="EC" id="4.2.1.20"/>
    </reaction>
</comment>
<comment type="cofactor">
    <cofactor>
        <name>pyridoxal 5'-phosphate</name>
        <dbReference type="ChEBI" id="CHEBI:597326"/>
    </cofactor>
</comment>
<comment type="pathway">
    <text>Amino-acid biosynthesis; L-tryptophan biosynthesis; L-tryptophan from chorismate: step 5/5.</text>
</comment>
<comment type="subunit">
    <text>Tetramer of two alpha and two beta chains.</text>
</comment>
<comment type="subcellular location">
    <subcellularLocation>
        <location evidence="4">Plastid</location>
        <location evidence="4">Chloroplast</location>
    </subcellularLocation>
</comment>
<comment type="similarity">
    <text evidence="4">Belongs to the TrpB family.</text>
</comment>
<protein>
    <recommendedName>
        <fullName>Tryptophan synthase beta chain 2, chloroplastic</fullName>
        <ecNumber>4.2.1.20</ecNumber>
    </recommendedName>
    <alternativeName>
        <fullName>Orange pericarp 2</fullName>
    </alternativeName>
</protein>
<sequence>PGPPPPAPEGRRRRGRGRNAAGQAVAAEASPAAVEMGNGAAAPGLQRPDAMGRFGRFGGKYVPETLMHALTELESAFHALATDDEFQKELDGILKDYVGRESPLYFAERLTEHYKRADGTGPLIYLKREDLNHTGAHKINNAVAQALLAKRLGKQRIIAETGAGQHGVATATVCRRFGLQCIIYMGAQDMERQALNVFRMRLLGAEVRAVHSGTATLKDATSEAIRDWVTNVETTHYILGSVAGPHPYPMMVREFHKVIGKETRRQAMDKWGGKPDVLVACVGGGSNAMGLFHEFVEDQDVRLVGLEAAGHGVDTDKHAATLTKGQVGVLHGSMSYLLQDDDGQVIEPHSISAGLDYPGVGPEHSFLKDIGRAEYDSVTDQEALDAFKRVSRLEGIIPALETSHALAYLEKLCPTLADGVRVVVNCSGRGDKDVHTASKYLDV</sequence>
<accession>P43284</accession>
<feature type="transit peptide" description="Chloroplast" evidence="2">
    <location>
        <begin position="1" status="less than"/>
        <end position="45"/>
    </location>
</feature>
<feature type="chain" id="PRO_0000035786" description="Tryptophan synthase beta chain 2, chloroplastic">
    <location>
        <begin position="46"/>
        <end position="443"/>
    </location>
</feature>
<feature type="region of interest" description="Disordered" evidence="3">
    <location>
        <begin position="1"/>
        <end position="32"/>
    </location>
</feature>
<feature type="compositionally biased region" description="Low complexity" evidence="3">
    <location>
        <begin position="18"/>
        <end position="32"/>
    </location>
</feature>
<feature type="modified residue" description="N6-(pyridoxal phosphate)lysine" evidence="1">
    <location>
        <position position="138"/>
    </location>
</feature>
<feature type="non-terminal residue">
    <location>
        <position position="1"/>
    </location>
</feature>
<organism>
    <name type="scientific">Zea mays</name>
    <name type="common">Maize</name>
    <dbReference type="NCBI Taxonomy" id="4577"/>
    <lineage>
        <taxon>Eukaryota</taxon>
        <taxon>Viridiplantae</taxon>
        <taxon>Streptophyta</taxon>
        <taxon>Embryophyta</taxon>
        <taxon>Tracheophyta</taxon>
        <taxon>Spermatophyta</taxon>
        <taxon>Magnoliopsida</taxon>
        <taxon>Liliopsida</taxon>
        <taxon>Poales</taxon>
        <taxon>Poaceae</taxon>
        <taxon>PACMAD clade</taxon>
        <taxon>Panicoideae</taxon>
        <taxon>Andropogonodae</taxon>
        <taxon>Andropogoneae</taxon>
        <taxon>Tripsacinae</taxon>
        <taxon>Zea</taxon>
    </lineage>
</organism>
<keyword id="KW-0028">Amino-acid biosynthesis</keyword>
<keyword id="KW-0057">Aromatic amino acid biosynthesis</keyword>
<keyword id="KW-0150">Chloroplast</keyword>
<keyword id="KW-0456">Lyase</keyword>
<keyword id="KW-0934">Plastid</keyword>
<keyword id="KW-0663">Pyridoxal phosphate</keyword>
<keyword id="KW-1185">Reference proteome</keyword>
<keyword id="KW-0809">Transit peptide</keyword>
<keyword id="KW-0822">Tryptophan biosynthesis</keyword>
<reference key="1">
    <citation type="journal article" date="1992" name="Plant Cell">
        <title>The maize auxotrophic mutant orange pericarp is defective in duplicate genes for tryptophan synthase beta.</title>
        <authorList>
            <person name="Wright A.D."/>
            <person name="Moehlenkamp C.A."/>
            <person name="Perrot G.H."/>
            <person name="Neuffer M.G."/>
            <person name="Cone K.C."/>
        </authorList>
    </citation>
    <scope>NUCLEOTIDE SEQUENCE [MRNA]</scope>
</reference>
<proteinExistence type="evidence at transcript level"/>
<dbReference type="EC" id="4.2.1.20"/>
<dbReference type="EMBL" id="M76685">
    <property type="protein sequence ID" value="AAA33491.1"/>
    <property type="molecule type" value="mRNA"/>
</dbReference>
<dbReference type="PIR" id="PQ0450">
    <property type="entry name" value="PQ0450"/>
</dbReference>
<dbReference type="SMR" id="P43284"/>
<dbReference type="FunCoup" id="P43284">
    <property type="interactions" value="870"/>
</dbReference>
<dbReference type="STRING" id="4577.P43284"/>
<dbReference type="PaxDb" id="4577-GRMZM2G005024_P01"/>
<dbReference type="MaizeGDB" id="15412"/>
<dbReference type="eggNOG" id="KOG1395">
    <property type="taxonomic scope" value="Eukaryota"/>
</dbReference>
<dbReference type="InParanoid" id="P43284"/>
<dbReference type="UniPathway" id="UPA00035">
    <property type="reaction ID" value="UER00044"/>
</dbReference>
<dbReference type="Proteomes" id="UP000007305">
    <property type="component" value="Unplaced"/>
</dbReference>
<dbReference type="ExpressionAtlas" id="P43284">
    <property type="expression patterns" value="baseline and differential"/>
</dbReference>
<dbReference type="GO" id="GO:0009507">
    <property type="term" value="C:chloroplast"/>
    <property type="evidence" value="ECO:0007669"/>
    <property type="project" value="UniProtKB-SubCell"/>
</dbReference>
<dbReference type="GO" id="GO:0005737">
    <property type="term" value="C:cytoplasm"/>
    <property type="evidence" value="ECO:0000318"/>
    <property type="project" value="GO_Central"/>
</dbReference>
<dbReference type="GO" id="GO:0004834">
    <property type="term" value="F:tryptophan synthase activity"/>
    <property type="evidence" value="ECO:0007669"/>
    <property type="project" value="UniProtKB-EC"/>
</dbReference>
<dbReference type="GO" id="GO:0000162">
    <property type="term" value="P:L-tryptophan biosynthetic process"/>
    <property type="evidence" value="ECO:0000318"/>
    <property type="project" value="GO_Central"/>
</dbReference>
<dbReference type="CDD" id="cd06446">
    <property type="entry name" value="Trp-synth_B"/>
    <property type="match status" value="1"/>
</dbReference>
<dbReference type="FunFam" id="3.40.50.1100:FF:000001">
    <property type="entry name" value="Tryptophan synthase beta chain"/>
    <property type="match status" value="1"/>
</dbReference>
<dbReference type="FunFam" id="3.40.50.1100:FF:000004">
    <property type="entry name" value="Tryptophan synthase beta chain"/>
    <property type="match status" value="1"/>
</dbReference>
<dbReference type="Gene3D" id="3.40.50.1100">
    <property type="match status" value="2"/>
</dbReference>
<dbReference type="HAMAP" id="MF_00133">
    <property type="entry name" value="Trp_synth_beta"/>
    <property type="match status" value="1"/>
</dbReference>
<dbReference type="InterPro" id="IPR006653">
    <property type="entry name" value="Trp_synth_b_CS"/>
</dbReference>
<dbReference type="InterPro" id="IPR006654">
    <property type="entry name" value="Trp_synth_beta"/>
</dbReference>
<dbReference type="InterPro" id="IPR023026">
    <property type="entry name" value="Trp_synth_beta/beta-like"/>
</dbReference>
<dbReference type="InterPro" id="IPR001926">
    <property type="entry name" value="TrpB-like_PALP"/>
</dbReference>
<dbReference type="InterPro" id="IPR036052">
    <property type="entry name" value="TrpB-like_PALP_sf"/>
</dbReference>
<dbReference type="NCBIfam" id="TIGR00263">
    <property type="entry name" value="trpB"/>
    <property type="match status" value="1"/>
</dbReference>
<dbReference type="PANTHER" id="PTHR48077:SF3">
    <property type="entry name" value="TRYPTOPHAN SYNTHASE"/>
    <property type="match status" value="1"/>
</dbReference>
<dbReference type="PANTHER" id="PTHR48077">
    <property type="entry name" value="TRYPTOPHAN SYNTHASE-RELATED"/>
    <property type="match status" value="1"/>
</dbReference>
<dbReference type="Pfam" id="PF00291">
    <property type="entry name" value="PALP"/>
    <property type="match status" value="1"/>
</dbReference>
<dbReference type="PIRSF" id="PIRSF001413">
    <property type="entry name" value="Trp_syn_beta"/>
    <property type="match status" value="1"/>
</dbReference>
<dbReference type="SUPFAM" id="SSF53686">
    <property type="entry name" value="Tryptophan synthase beta subunit-like PLP-dependent enzymes"/>
    <property type="match status" value="1"/>
</dbReference>
<dbReference type="PROSITE" id="PS00168">
    <property type="entry name" value="TRP_SYNTHASE_BETA"/>
    <property type="match status" value="1"/>
</dbReference>
<evidence type="ECO:0000250" key="1"/>
<evidence type="ECO:0000255" key="2"/>
<evidence type="ECO:0000256" key="3">
    <source>
        <dbReference type="SAM" id="MobiDB-lite"/>
    </source>
</evidence>
<evidence type="ECO:0000305" key="4"/>